<accession>Q5XGR8</accession>
<dbReference type="EC" id="3.1.27.-" evidence="1"/>
<dbReference type="EMBL" id="BC084364">
    <property type="protein sequence ID" value="AAH84364.1"/>
    <property type="molecule type" value="mRNA"/>
</dbReference>
<dbReference type="RefSeq" id="NP_001088412.1">
    <property type="nucleotide sequence ID" value="NM_001094943.1"/>
</dbReference>
<dbReference type="SMR" id="Q5XGR8"/>
<dbReference type="DNASU" id="495268"/>
<dbReference type="GeneID" id="495268"/>
<dbReference type="KEGG" id="xla:495268"/>
<dbReference type="AGR" id="Xenbase:XB-GENE-954715"/>
<dbReference type="CTD" id="495268"/>
<dbReference type="Xenbase" id="XB-GENE-954715">
    <property type="gene designation" value="lactb2.L"/>
</dbReference>
<dbReference type="OrthoDB" id="17458at2759"/>
<dbReference type="Proteomes" id="UP000186698">
    <property type="component" value="Chromosome 6L"/>
</dbReference>
<dbReference type="Bgee" id="495268">
    <property type="expression patterns" value="Expressed in muscle tissue and 19 other cell types or tissues"/>
</dbReference>
<dbReference type="GO" id="GO:0005759">
    <property type="term" value="C:mitochondrial matrix"/>
    <property type="evidence" value="ECO:0000250"/>
    <property type="project" value="UniProtKB"/>
</dbReference>
<dbReference type="GO" id="GO:0004521">
    <property type="term" value="F:RNA endonuclease activity"/>
    <property type="evidence" value="ECO:0000250"/>
    <property type="project" value="UniProtKB"/>
</dbReference>
<dbReference type="GO" id="GO:0003727">
    <property type="term" value="F:single-stranded RNA binding"/>
    <property type="evidence" value="ECO:0000250"/>
    <property type="project" value="UniProtKB"/>
</dbReference>
<dbReference type="GO" id="GO:0008270">
    <property type="term" value="F:zinc ion binding"/>
    <property type="evidence" value="ECO:0000250"/>
    <property type="project" value="UniProtKB"/>
</dbReference>
<dbReference type="CDD" id="cd07722">
    <property type="entry name" value="LACTB2-like_MBL-fold"/>
    <property type="match status" value="1"/>
</dbReference>
<dbReference type="FunFam" id="1.10.10.10:FF:000328">
    <property type="entry name" value="Lactamase beta 2"/>
    <property type="match status" value="1"/>
</dbReference>
<dbReference type="FunFam" id="3.60.15.10:FF:000017">
    <property type="entry name" value="Lactamase beta 2"/>
    <property type="match status" value="1"/>
</dbReference>
<dbReference type="Gene3D" id="3.60.15.10">
    <property type="entry name" value="Ribonuclease Z/Hydroxyacylglutathione hydrolase-like"/>
    <property type="match status" value="1"/>
</dbReference>
<dbReference type="Gene3D" id="1.10.10.10">
    <property type="entry name" value="Winged helix-like DNA-binding domain superfamily/Winged helix DNA-binding domain"/>
    <property type="match status" value="1"/>
</dbReference>
<dbReference type="InterPro" id="IPR047921">
    <property type="entry name" value="LACTB2-like_MBL-fold"/>
</dbReference>
<dbReference type="InterPro" id="IPR041516">
    <property type="entry name" value="LACTB2_WH"/>
</dbReference>
<dbReference type="InterPro" id="IPR001279">
    <property type="entry name" value="Metallo-B-lactamas"/>
</dbReference>
<dbReference type="InterPro" id="IPR036866">
    <property type="entry name" value="RibonucZ/Hydroxyglut_hydro"/>
</dbReference>
<dbReference type="InterPro" id="IPR050662">
    <property type="entry name" value="Sec-metab_biosynth-thioest"/>
</dbReference>
<dbReference type="InterPro" id="IPR036388">
    <property type="entry name" value="WH-like_DNA-bd_sf"/>
</dbReference>
<dbReference type="PANTHER" id="PTHR23131">
    <property type="entry name" value="ENDORIBONUCLEASE LACTB2"/>
    <property type="match status" value="1"/>
</dbReference>
<dbReference type="PANTHER" id="PTHR23131:SF0">
    <property type="entry name" value="ENDORIBONUCLEASE LACTB2"/>
    <property type="match status" value="1"/>
</dbReference>
<dbReference type="Pfam" id="PF17778">
    <property type="entry name" value="BLACT_WH"/>
    <property type="match status" value="1"/>
</dbReference>
<dbReference type="Pfam" id="PF00753">
    <property type="entry name" value="Lactamase_B"/>
    <property type="match status" value="1"/>
</dbReference>
<dbReference type="SMART" id="SM00849">
    <property type="entry name" value="Lactamase_B"/>
    <property type="match status" value="1"/>
</dbReference>
<dbReference type="SUPFAM" id="SSF56281">
    <property type="entry name" value="Metallo-hydrolase/oxidoreductase"/>
    <property type="match status" value="1"/>
</dbReference>
<reference key="1">
    <citation type="submission" date="2004-10" db="EMBL/GenBank/DDBJ databases">
        <authorList>
            <consortium name="NIH - Xenopus Gene Collection (XGC) project"/>
        </authorList>
    </citation>
    <scope>NUCLEOTIDE SEQUENCE [LARGE SCALE MRNA]</scope>
    <source>
        <tissue>Brain</tissue>
    </source>
</reference>
<keyword id="KW-0255">Endonuclease</keyword>
<keyword id="KW-0378">Hydrolase</keyword>
<keyword id="KW-0479">Metal-binding</keyword>
<keyword id="KW-0496">Mitochondrion</keyword>
<keyword id="KW-0540">Nuclease</keyword>
<keyword id="KW-1185">Reference proteome</keyword>
<keyword id="KW-0694">RNA-binding</keyword>
<keyword id="KW-0862">Zinc</keyword>
<comment type="function">
    <text evidence="1">Endoribonuclease; cleaves preferentially 3' to purine-pyrimidine dinucleotide motifs in single-stranded RNA. The cleavage product contains a free 3' -OH group. Has no activity with double-stranded RNA or DNA. Required for normal mitochondrial function and cell viability.</text>
</comment>
<comment type="cofactor">
    <cofactor evidence="1">
        <name>Zn(2+)</name>
        <dbReference type="ChEBI" id="CHEBI:29105"/>
    </cofactor>
    <text evidence="1">Binds 2 Zn(2+) ions per subunit.</text>
</comment>
<comment type="subcellular location">
    <subcellularLocation>
        <location evidence="1">Mitochondrion matrix</location>
    </subcellularLocation>
</comment>
<comment type="similarity">
    <text evidence="2">Belongs to the metallo-beta-lactamase superfamily. Glyoxalase II family.</text>
</comment>
<name>LACB2_XENLA</name>
<protein>
    <recommendedName>
        <fullName evidence="1">Endoribonuclease LACTB2</fullName>
    </recommendedName>
    <alternativeName>
        <fullName>Beta-lactamase-like protein 2</fullName>
        <ecNumber evidence="1">3.1.27.-</ecNumber>
    </alternativeName>
</protein>
<feature type="chain" id="PRO_0000315747" description="Endoribonuclease LACTB2">
    <location>
        <begin position="1"/>
        <end position="287"/>
    </location>
</feature>
<feature type="binding site" evidence="1">
    <location>
        <position position="78"/>
    </location>
    <ligand>
        <name>Zn(2+)</name>
        <dbReference type="ChEBI" id="CHEBI:29105"/>
        <label>1</label>
    </ligand>
</feature>
<feature type="binding site" evidence="1">
    <location>
        <position position="80"/>
    </location>
    <ligand>
        <name>Zn(2+)</name>
        <dbReference type="ChEBI" id="CHEBI:29105"/>
        <label>1</label>
    </ligand>
</feature>
<feature type="binding site" evidence="1">
    <location>
        <position position="82"/>
    </location>
    <ligand>
        <name>Zn(2+)</name>
        <dbReference type="ChEBI" id="CHEBI:29105"/>
        <label>2</label>
    </ligand>
</feature>
<feature type="binding site" evidence="1">
    <location>
        <position position="83"/>
    </location>
    <ligand>
        <name>Zn(2+)</name>
        <dbReference type="ChEBI" id="CHEBI:29105"/>
        <label>2</label>
    </ligand>
</feature>
<feature type="binding site" evidence="1">
    <location>
        <position position="144"/>
    </location>
    <ligand>
        <name>Zn(2+)</name>
        <dbReference type="ChEBI" id="CHEBI:29105"/>
        <label>1</label>
    </ligand>
</feature>
<feature type="binding site" evidence="1">
    <location>
        <position position="163"/>
    </location>
    <ligand>
        <name>Zn(2+)</name>
        <dbReference type="ChEBI" id="CHEBI:29105"/>
        <label>1</label>
    </ligand>
</feature>
<feature type="binding site" evidence="1">
    <location>
        <position position="163"/>
    </location>
    <ligand>
        <name>Zn(2+)</name>
        <dbReference type="ChEBI" id="CHEBI:29105"/>
        <label>2</label>
    </ligand>
</feature>
<feature type="binding site" evidence="1">
    <location>
        <position position="198"/>
    </location>
    <ligand>
        <name>Zn(2+)</name>
        <dbReference type="ChEBI" id="CHEBI:29105"/>
        <label>2</label>
    </ligand>
</feature>
<gene>
    <name type="primary">lactb2</name>
</gene>
<sequence>MSLSVLPRLEQLSSRVVRVLGCNPGPMTLQGTNTYLVGTGSRRILIDTGEPAVPEYISCLKQALIEFNTSIQEIIVTHWHVDHVGGIADISRDIMKGCNFSINKLPRNPHQEEVIADHKYNYLKDGDIITTEGATLRVLYTPGHTDDHMALELLEENAIFSGDCILGEGTAVFEDLYDYMKSLEKLLEMKADKIYPGHGPVVLGARAKIQEYISHRHAREQQILQALQENRGKSFTSMDLVKIVYKDTPEYLHKAAEFNLTHHLQKLKKEGKISEEQSPTVRWRSNL</sequence>
<proteinExistence type="evidence at transcript level"/>
<evidence type="ECO:0000250" key="1">
    <source>
        <dbReference type="UniProtKB" id="Q53H82"/>
    </source>
</evidence>
<evidence type="ECO:0000305" key="2"/>
<organism>
    <name type="scientific">Xenopus laevis</name>
    <name type="common">African clawed frog</name>
    <dbReference type="NCBI Taxonomy" id="8355"/>
    <lineage>
        <taxon>Eukaryota</taxon>
        <taxon>Metazoa</taxon>
        <taxon>Chordata</taxon>
        <taxon>Craniata</taxon>
        <taxon>Vertebrata</taxon>
        <taxon>Euteleostomi</taxon>
        <taxon>Amphibia</taxon>
        <taxon>Batrachia</taxon>
        <taxon>Anura</taxon>
        <taxon>Pipoidea</taxon>
        <taxon>Pipidae</taxon>
        <taxon>Xenopodinae</taxon>
        <taxon>Xenopus</taxon>
        <taxon>Xenopus</taxon>
    </lineage>
</organism>